<accession>P0A2V2</accession>
<accession>P35117</accession>
<sequence>MPNPVRPAVQLKDIRKNFGNLEVLHGVSLSANEGEVISILGSSGSGKSTLLRCVNMLEVPNAGSVAIMGEEIALEHRAGRLARPKDLKQVNRLRERAAMVFQGFNLWSHQTILQNVMEAPVHVQGRDRKACRDEAEALLERVGIASKRDAYPSELSGGQQQRAAIARALAMRPDVMLFDEPTSALDPELVGEVLKVMRDLAAEGRTMLIVTHEMDFARDVSSRTVFLHQGVIAEEGPSSEMFAHPRTDRFRQFLRRDGGTSH</sequence>
<dbReference type="EMBL" id="AF242881">
    <property type="protein sequence ID" value="AAA98381.1"/>
    <property type="molecule type" value="Genomic_DNA"/>
</dbReference>
<dbReference type="PIR" id="C41044">
    <property type="entry name" value="C41044"/>
</dbReference>
<dbReference type="RefSeq" id="NP_059712.1">
    <property type="nucleotide sequence ID" value="NC_002377.1"/>
</dbReference>
<dbReference type="RefSeq" id="WP_010892400.1">
    <property type="nucleotide sequence ID" value="NZ_QSNU01000012.1"/>
</dbReference>
<dbReference type="SMR" id="P0A2V2"/>
<dbReference type="TCDB" id="3.A.1.3.5">
    <property type="family name" value="the atp-binding cassette (abc) superfamily"/>
</dbReference>
<dbReference type="OrthoDB" id="9802264at2"/>
<dbReference type="GO" id="GO:0005886">
    <property type="term" value="C:plasma membrane"/>
    <property type="evidence" value="ECO:0007669"/>
    <property type="project" value="UniProtKB-SubCell"/>
</dbReference>
<dbReference type="GO" id="GO:0015424">
    <property type="term" value="F:ABC-type amino acid transporter activity"/>
    <property type="evidence" value="ECO:0007669"/>
    <property type="project" value="InterPro"/>
</dbReference>
<dbReference type="GO" id="GO:0005524">
    <property type="term" value="F:ATP binding"/>
    <property type="evidence" value="ECO:0007669"/>
    <property type="project" value="UniProtKB-KW"/>
</dbReference>
<dbReference type="GO" id="GO:0016887">
    <property type="term" value="F:ATP hydrolysis activity"/>
    <property type="evidence" value="ECO:0007669"/>
    <property type="project" value="InterPro"/>
</dbReference>
<dbReference type="CDD" id="cd03262">
    <property type="entry name" value="ABC_HisP_GlnQ"/>
    <property type="match status" value="1"/>
</dbReference>
<dbReference type="FunFam" id="3.40.50.300:FF:000020">
    <property type="entry name" value="Amino acid ABC transporter ATP-binding component"/>
    <property type="match status" value="1"/>
</dbReference>
<dbReference type="Gene3D" id="3.40.50.300">
    <property type="entry name" value="P-loop containing nucleotide triphosphate hydrolases"/>
    <property type="match status" value="1"/>
</dbReference>
<dbReference type="InterPro" id="IPR003593">
    <property type="entry name" value="AAA+_ATPase"/>
</dbReference>
<dbReference type="InterPro" id="IPR030679">
    <property type="entry name" value="ABC_ATPase_HisP-typ"/>
</dbReference>
<dbReference type="InterPro" id="IPR003439">
    <property type="entry name" value="ABC_transporter-like_ATP-bd"/>
</dbReference>
<dbReference type="InterPro" id="IPR017871">
    <property type="entry name" value="ABC_transporter-like_CS"/>
</dbReference>
<dbReference type="InterPro" id="IPR050086">
    <property type="entry name" value="MetN_ABC_transporter-like"/>
</dbReference>
<dbReference type="InterPro" id="IPR027417">
    <property type="entry name" value="P-loop_NTPase"/>
</dbReference>
<dbReference type="PANTHER" id="PTHR43166">
    <property type="entry name" value="AMINO ACID IMPORT ATP-BINDING PROTEIN"/>
    <property type="match status" value="1"/>
</dbReference>
<dbReference type="PANTHER" id="PTHR43166:SF35">
    <property type="entry name" value="L-CYSTINE IMPORT ATP-BINDING PROTEIN TCYN"/>
    <property type="match status" value="1"/>
</dbReference>
<dbReference type="Pfam" id="PF00005">
    <property type="entry name" value="ABC_tran"/>
    <property type="match status" value="1"/>
</dbReference>
<dbReference type="PIRSF" id="PIRSF039085">
    <property type="entry name" value="ABC_ATPase_HisP"/>
    <property type="match status" value="1"/>
</dbReference>
<dbReference type="SMART" id="SM00382">
    <property type="entry name" value="AAA"/>
    <property type="match status" value="1"/>
</dbReference>
<dbReference type="SUPFAM" id="SSF52540">
    <property type="entry name" value="P-loop containing nucleoside triphosphate hydrolases"/>
    <property type="match status" value="1"/>
</dbReference>
<dbReference type="PROSITE" id="PS00211">
    <property type="entry name" value="ABC_TRANSPORTER_1"/>
    <property type="match status" value="1"/>
</dbReference>
<dbReference type="PROSITE" id="PS50893">
    <property type="entry name" value="ABC_TRANSPORTER_2"/>
    <property type="match status" value="1"/>
</dbReference>
<gene>
    <name type="primary">occP</name>
</gene>
<comment type="function">
    <text>Component of the octopine active transport system probably consisting of four subunits: Q, M, P and T.</text>
</comment>
<comment type="subcellular location">
    <subcellularLocation>
        <location evidence="2">Cell inner membrane</location>
        <topology evidence="2">Peripheral membrane protein</topology>
    </subcellularLocation>
</comment>
<comment type="induction">
    <text>By octopine.</text>
</comment>
<comment type="similarity">
    <text evidence="2">Belongs to the ABC transporter superfamily.</text>
</comment>
<keyword id="KW-0067">ATP-binding</keyword>
<keyword id="KW-0997">Cell inner membrane</keyword>
<keyword id="KW-1003">Cell membrane</keyword>
<keyword id="KW-0472">Membrane</keyword>
<keyword id="KW-0547">Nucleotide-binding</keyword>
<keyword id="KW-0614">Plasmid</keyword>
<keyword id="KW-0813">Transport</keyword>
<reference key="1">
    <citation type="journal article" date="1991" name="J. Bacteriol.">
        <title>Characterization of a putative periplasmic transport system for octopine accumulation encoded by Agrobacterium tumefaciens Ti plasmid pTiA6.</title>
        <authorList>
            <person name="Valdivia R.H."/>
            <person name="Wang L."/>
            <person name="Winans S.C."/>
        </authorList>
    </citation>
    <scope>NUCLEOTIDE SEQUENCE [GENOMIC DNA]</scope>
    <source>
        <plasmid>pTiA6NC</plasmid>
    </source>
</reference>
<reference key="2">
    <citation type="journal article" date="1992" name="J. Bacteriol.">
        <title>Opine transport genes in the octopine (occ) and nopaline (noc) catabolic regions in Ti plasmids of Agrobacterium tumefaciens.</title>
        <authorList>
            <person name="Zanker H."/>
            <person name="von Lintig J."/>
            <person name="Schroeder J."/>
        </authorList>
    </citation>
    <scope>NUCLEOTIDE SEQUENCE [GENOMIC DNA]</scope>
    <source>
        <plasmid>pTiB6S3</plasmid>
    </source>
</reference>
<protein>
    <recommendedName>
        <fullName>Octopine permease ATP-binding protein P</fullName>
    </recommendedName>
</protein>
<proteinExistence type="evidence at transcript level"/>
<geneLocation type="plasmid">
    <name>pTiA6NC</name>
</geneLocation>
<geneLocation type="plasmid">
    <name>pTiB6S3</name>
</geneLocation>
<name>OCCP_RHIRD</name>
<feature type="chain" id="PRO_0000092651" description="Octopine permease ATP-binding protein P">
    <location>
        <begin position="1"/>
        <end position="262"/>
    </location>
</feature>
<feature type="domain" description="ABC transporter" evidence="1">
    <location>
        <begin position="9"/>
        <end position="254"/>
    </location>
</feature>
<feature type="binding site" evidence="1">
    <location>
        <begin position="41"/>
        <end position="48"/>
    </location>
    <ligand>
        <name>ATP</name>
        <dbReference type="ChEBI" id="CHEBI:30616"/>
    </ligand>
</feature>
<organism>
    <name type="scientific">Rhizobium radiobacter</name>
    <name type="common">Agrobacterium tumefaciens</name>
    <name type="synonym">Agrobacterium radiobacter</name>
    <dbReference type="NCBI Taxonomy" id="358"/>
    <lineage>
        <taxon>Bacteria</taxon>
        <taxon>Pseudomonadati</taxon>
        <taxon>Pseudomonadota</taxon>
        <taxon>Alphaproteobacteria</taxon>
        <taxon>Hyphomicrobiales</taxon>
        <taxon>Rhizobiaceae</taxon>
        <taxon>Rhizobium/Agrobacterium group</taxon>
        <taxon>Agrobacterium</taxon>
        <taxon>Agrobacterium tumefaciens complex</taxon>
    </lineage>
</organism>
<evidence type="ECO:0000255" key="1">
    <source>
        <dbReference type="PROSITE-ProRule" id="PRU00434"/>
    </source>
</evidence>
<evidence type="ECO:0000305" key="2"/>